<proteinExistence type="evidence at protein level"/>
<keyword id="KW-0029">Amino-acid transport</keyword>
<keyword id="KW-0256">Endoplasmic reticulum</keyword>
<keyword id="KW-0472">Membrane</keyword>
<keyword id="KW-0597">Phosphoprotein</keyword>
<keyword id="KW-1185">Reference proteome</keyword>
<keyword id="KW-0749">Sporulation</keyword>
<keyword id="KW-0812">Transmembrane</keyword>
<keyword id="KW-1133">Transmembrane helix</keyword>
<keyword id="KW-0813">Transport</keyword>
<keyword id="KW-0926">Vacuole</keyword>
<protein>
    <recommendedName>
        <fullName>Vacuolar amino acid transporter 3</fullName>
    </recommendedName>
</protein>
<comment type="function">
    <text evidence="1 6">Involved in amino acid efflux from the vacuole to the cytoplasm. Capable of transporting large neutral amino acids including tyrosine, glutamine, asparagine, isoleucine and leucine (By similarity). Required for spore formation.</text>
</comment>
<comment type="subcellular location">
    <subcellularLocation>
        <location evidence="4">Endoplasmic reticulum membrane</location>
        <topology evidence="4">Multi-pass membrane protein</topology>
    </subcellularLocation>
    <subcellularLocation>
        <location evidence="1">Vacuole membrane</location>
        <topology evidence="1">Multi-pass membrane protein</topology>
    </subcellularLocation>
</comment>
<comment type="similarity">
    <text evidence="7">Belongs to the amino acid/polyamine transporter 2 family.</text>
</comment>
<feature type="chain" id="PRO_0000093833" description="Vacuolar amino acid transporter 3">
    <location>
        <begin position="1"/>
        <end position="656"/>
    </location>
</feature>
<feature type="transmembrane region" description="Helical" evidence="2">
    <location>
        <begin position="280"/>
        <end position="300"/>
    </location>
</feature>
<feature type="transmembrane region" description="Helical" evidence="2">
    <location>
        <begin position="307"/>
        <end position="327"/>
    </location>
</feature>
<feature type="transmembrane region" description="Helical" evidence="2">
    <location>
        <begin position="351"/>
        <end position="371"/>
    </location>
</feature>
<feature type="transmembrane region" description="Helical" evidence="2">
    <location>
        <begin position="389"/>
        <end position="409"/>
    </location>
</feature>
<feature type="transmembrane region" description="Helical" evidence="2">
    <location>
        <begin position="419"/>
        <end position="439"/>
    </location>
</feature>
<feature type="transmembrane region" description="Helical" evidence="2">
    <location>
        <begin position="457"/>
        <end position="477"/>
    </location>
</feature>
<feature type="transmembrane region" description="Helical" evidence="2">
    <location>
        <begin position="494"/>
        <end position="514"/>
    </location>
</feature>
<feature type="transmembrane region" description="Helical" evidence="2">
    <location>
        <begin position="537"/>
        <end position="557"/>
    </location>
</feature>
<feature type="transmembrane region" description="Helical" evidence="2">
    <location>
        <begin position="578"/>
        <end position="598"/>
    </location>
</feature>
<feature type="transmembrane region" description="Helical" evidence="2">
    <location>
        <begin position="601"/>
        <end position="621"/>
    </location>
</feature>
<feature type="transmembrane region" description="Helical" evidence="2">
    <location>
        <begin position="636"/>
        <end position="656"/>
    </location>
</feature>
<feature type="region of interest" description="Disordered" evidence="3">
    <location>
        <begin position="1"/>
        <end position="109"/>
    </location>
</feature>
<feature type="compositionally biased region" description="Polar residues" evidence="3">
    <location>
        <begin position="15"/>
        <end position="28"/>
    </location>
</feature>
<feature type="compositionally biased region" description="Polar residues" evidence="3">
    <location>
        <begin position="50"/>
        <end position="71"/>
    </location>
</feature>
<feature type="compositionally biased region" description="Basic and acidic residues" evidence="3">
    <location>
        <begin position="75"/>
        <end position="97"/>
    </location>
</feature>
<feature type="modified residue" description="Phosphoserine" evidence="5">
    <location>
        <position position="37"/>
    </location>
</feature>
<feature type="modified residue" description="Phosphoserine" evidence="5">
    <location>
        <position position="53"/>
    </location>
</feature>
<feature type="modified residue" description="Phosphoserine" evidence="5">
    <location>
        <position position="172"/>
    </location>
</feature>
<name>AVT3_SCHPO</name>
<dbReference type="EMBL" id="CU329670">
    <property type="protein sequence ID" value="CAA92262.1"/>
    <property type="molecule type" value="Genomic_DNA"/>
</dbReference>
<dbReference type="PIR" id="T38741">
    <property type="entry name" value="T38741"/>
</dbReference>
<dbReference type="RefSeq" id="NP_593551.1">
    <property type="nucleotide sequence ID" value="NM_001018984.2"/>
</dbReference>
<dbReference type="SMR" id="Q10074"/>
<dbReference type="BioGRID" id="280026">
    <property type="interactions" value="2"/>
</dbReference>
<dbReference type="FunCoup" id="Q10074">
    <property type="interactions" value="71"/>
</dbReference>
<dbReference type="STRING" id="284812.Q10074"/>
<dbReference type="TCDB" id="2.A.18.7.3">
    <property type="family name" value="the amino acid/auxin permease (aaap) family"/>
</dbReference>
<dbReference type="iPTMnet" id="Q10074"/>
<dbReference type="PaxDb" id="4896-SPAC3H1.09c.1"/>
<dbReference type="EnsemblFungi" id="SPAC3H1.09c.1">
    <property type="protein sequence ID" value="SPAC3H1.09c.1:pep"/>
    <property type="gene ID" value="SPAC3H1.09c"/>
</dbReference>
<dbReference type="GeneID" id="2543612"/>
<dbReference type="KEGG" id="spo:2543612"/>
<dbReference type="PomBase" id="SPAC3H1.09c">
    <property type="gene designation" value="avt3"/>
</dbReference>
<dbReference type="VEuPathDB" id="FungiDB:SPAC3H1.09c"/>
<dbReference type="eggNOG" id="KOG1304">
    <property type="taxonomic scope" value="Eukaryota"/>
</dbReference>
<dbReference type="HOGENOM" id="CLU_009646_3_2_1"/>
<dbReference type="InParanoid" id="Q10074"/>
<dbReference type="OMA" id="QESMKQP"/>
<dbReference type="PhylomeDB" id="Q10074"/>
<dbReference type="PRO" id="PR:Q10074"/>
<dbReference type="Proteomes" id="UP000002485">
    <property type="component" value="Chromosome I"/>
</dbReference>
<dbReference type="GO" id="GO:0005783">
    <property type="term" value="C:endoplasmic reticulum"/>
    <property type="evidence" value="ECO:0007005"/>
    <property type="project" value="PomBase"/>
</dbReference>
<dbReference type="GO" id="GO:0005789">
    <property type="term" value="C:endoplasmic reticulum membrane"/>
    <property type="evidence" value="ECO:0007669"/>
    <property type="project" value="UniProtKB-SubCell"/>
</dbReference>
<dbReference type="GO" id="GO:0000329">
    <property type="term" value="C:fungal-type vacuole membrane"/>
    <property type="evidence" value="ECO:0000314"/>
    <property type="project" value="PomBase"/>
</dbReference>
<dbReference type="GO" id="GO:0005774">
    <property type="term" value="C:vacuolar membrane"/>
    <property type="evidence" value="ECO:0000318"/>
    <property type="project" value="GO_Central"/>
</dbReference>
<dbReference type="GO" id="GO:0015179">
    <property type="term" value="F:L-amino acid transmembrane transporter activity"/>
    <property type="evidence" value="ECO:0000318"/>
    <property type="project" value="GO_Central"/>
</dbReference>
<dbReference type="GO" id="GO:0061459">
    <property type="term" value="F:L-arginine transmembrane transporter activity"/>
    <property type="evidence" value="ECO:0000315"/>
    <property type="project" value="PomBase"/>
</dbReference>
<dbReference type="GO" id="GO:0005290">
    <property type="term" value="F:L-histidine transmembrane transporter activity"/>
    <property type="evidence" value="ECO:0000315"/>
    <property type="project" value="PomBase"/>
</dbReference>
<dbReference type="GO" id="GO:0015189">
    <property type="term" value="F:L-lysine transmembrane transporter activity"/>
    <property type="evidence" value="ECO:0000315"/>
    <property type="project" value="PomBase"/>
</dbReference>
<dbReference type="GO" id="GO:0003333">
    <property type="term" value="P:amino acid transmembrane transport"/>
    <property type="evidence" value="ECO:0000318"/>
    <property type="project" value="GO_Central"/>
</dbReference>
<dbReference type="GO" id="GO:1990818">
    <property type="term" value="P:L-arginine transmembrane export from vacuole"/>
    <property type="evidence" value="ECO:0000315"/>
    <property type="project" value="PomBase"/>
</dbReference>
<dbReference type="GO" id="GO:0089708">
    <property type="term" value="P:L-histidine transmembrane export from vacuole"/>
    <property type="evidence" value="ECO:0000315"/>
    <property type="project" value="PomBase"/>
</dbReference>
<dbReference type="GO" id="GO:0089707">
    <property type="term" value="P:L-lysine transmembrane export from vacuole"/>
    <property type="evidence" value="ECO:0000315"/>
    <property type="project" value="PomBase"/>
</dbReference>
<dbReference type="GO" id="GO:0030435">
    <property type="term" value="P:sporulation resulting in formation of a cellular spore"/>
    <property type="evidence" value="ECO:0007669"/>
    <property type="project" value="UniProtKB-KW"/>
</dbReference>
<dbReference type="InterPro" id="IPR013057">
    <property type="entry name" value="AA_transpt_TM"/>
</dbReference>
<dbReference type="PANTHER" id="PTHR22950">
    <property type="entry name" value="AMINO ACID TRANSPORTER"/>
    <property type="match status" value="1"/>
</dbReference>
<dbReference type="PANTHER" id="PTHR22950:SF666">
    <property type="entry name" value="VACUOLAR AMINO ACID TRANSPORTER 4"/>
    <property type="match status" value="1"/>
</dbReference>
<dbReference type="Pfam" id="PF01490">
    <property type="entry name" value="Aa_trans"/>
    <property type="match status" value="1"/>
</dbReference>
<reference key="1">
    <citation type="journal article" date="2002" name="Nature">
        <title>The genome sequence of Schizosaccharomyces pombe.</title>
        <authorList>
            <person name="Wood V."/>
            <person name="Gwilliam R."/>
            <person name="Rajandream M.A."/>
            <person name="Lyne M.H."/>
            <person name="Lyne R."/>
            <person name="Stewart A."/>
            <person name="Sgouros J.G."/>
            <person name="Peat N."/>
            <person name="Hayles J."/>
            <person name="Baker S.G."/>
            <person name="Basham D."/>
            <person name="Bowman S."/>
            <person name="Brooks K."/>
            <person name="Brown D."/>
            <person name="Brown S."/>
            <person name="Chillingworth T."/>
            <person name="Churcher C.M."/>
            <person name="Collins M."/>
            <person name="Connor R."/>
            <person name="Cronin A."/>
            <person name="Davis P."/>
            <person name="Feltwell T."/>
            <person name="Fraser A."/>
            <person name="Gentles S."/>
            <person name="Goble A."/>
            <person name="Hamlin N."/>
            <person name="Harris D.E."/>
            <person name="Hidalgo J."/>
            <person name="Hodgson G."/>
            <person name="Holroyd S."/>
            <person name="Hornsby T."/>
            <person name="Howarth S."/>
            <person name="Huckle E.J."/>
            <person name="Hunt S."/>
            <person name="Jagels K."/>
            <person name="James K.D."/>
            <person name="Jones L."/>
            <person name="Jones M."/>
            <person name="Leather S."/>
            <person name="McDonald S."/>
            <person name="McLean J."/>
            <person name="Mooney P."/>
            <person name="Moule S."/>
            <person name="Mungall K.L."/>
            <person name="Murphy L.D."/>
            <person name="Niblett D."/>
            <person name="Odell C."/>
            <person name="Oliver K."/>
            <person name="O'Neil S."/>
            <person name="Pearson D."/>
            <person name="Quail M.A."/>
            <person name="Rabbinowitsch E."/>
            <person name="Rutherford K.M."/>
            <person name="Rutter S."/>
            <person name="Saunders D."/>
            <person name="Seeger K."/>
            <person name="Sharp S."/>
            <person name="Skelton J."/>
            <person name="Simmonds M.N."/>
            <person name="Squares R."/>
            <person name="Squares S."/>
            <person name="Stevens K."/>
            <person name="Taylor K."/>
            <person name="Taylor R.G."/>
            <person name="Tivey A."/>
            <person name="Walsh S.V."/>
            <person name="Warren T."/>
            <person name="Whitehead S."/>
            <person name="Woodward J.R."/>
            <person name="Volckaert G."/>
            <person name="Aert R."/>
            <person name="Robben J."/>
            <person name="Grymonprez B."/>
            <person name="Weltjens I."/>
            <person name="Vanstreels E."/>
            <person name="Rieger M."/>
            <person name="Schaefer M."/>
            <person name="Mueller-Auer S."/>
            <person name="Gabel C."/>
            <person name="Fuchs M."/>
            <person name="Duesterhoeft A."/>
            <person name="Fritzc C."/>
            <person name="Holzer E."/>
            <person name="Moestl D."/>
            <person name="Hilbert H."/>
            <person name="Borzym K."/>
            <person name="Langer I."/>
            <person name="Beck A."/>
            <person name="Lehrach H."/>
            <person name="Reinhardt R."/>
            <person name="Pohl T.M."/>
            <person name="Eger P."/>
            <person name="Zimmermann W."/>
            <person name="Wedler H."/>
            <person name="Wambutt R."/>
            <person name="Purnelle B."/>
            <person name="Goffeau A."/>
            <person name="Cadieu E."/>
            <person name="Dreano S."/>
            <person name="Gloux S."/>
            <person name="Lelaure V."/>
            <person name="Mottier S."/>
            <person name="Galibert F."/>
            <person name="Aves S.J."/>
            <person name="Xiang Z."/>
            <person name="Hunt C."/>
            <person name="Moore K."/>
            <person name="Hurst S.M."/>
            <person name="Lucas M."/>
            <person name="Rochet M."/>
            <person name="Gaillardin C."/>
            <person name="Tallada V.A."/>
            <person name="Garzon A."/>
            <person name="Thode G."/>
            <person name="Daga R.R."/>
            <person name="Cruzado L."/>
            <person name="Jimenez J."/>
            <person name="Sanchez M."/>
            <person name="del Rey F."/>
            <person name="Benito J."/>
            <person name="Dominguez A."/>
            <person name="Revuelta J.L."/>
            <person name="Moreno S."/>
            <person name="Armstrong J."/>
            <person name="Forsburg S.L."/>
            <person name="Cerutti L."/>
            <person name="Lowe T."/>
            <person name="McCombie W.R."/>
            <person name="Paulsen I."/>
            <person name="Potashkin J."/>
            <person name="Shpakovski G.V."/>
            <person name="Ussery D."/>
            <person name="Barrell B.G."/>
            <person name="Nurse P."/>
        </authorList>
    </citation>
    <scope>NUCLEOTIDE SEQUENCE [LARGE SCALE GENOMIC DNA]</scope>
    <source>
        <strain>972 / ATCC 24843</strain>
    </source>
</reference>
<reference key="2">
    <citation type="journal article" date="2006" name="Nat. Biotechnol.">
        <title>ORFeome cloning and global analysis of protein localization in the fission yeast Schizosaccharomyces pombe.</title>
        <authorList>
            <person name="Matsuyama A."/>
            <person name="Arai R."/>
            <person name="Yashiroda Y."/>
            <person name="Shirai A."/>
            <person name="Kamata A."/>
            <person name="Sekido S."/>
            <person name="Kobayashi Y."/>
            <person name="Hashimoto A."/>
            <person name="Hamamoto M."/>
            <person name="Hiraoka Y."/>
            <person name="Horinouchi S."/>
            <person name="Yoshida M."/>
        </authorList>
    </citation>
    <scope>SUBCELLULAR LOCATION [LARGE SCALE ANALYSIS]</scope>
</reference>
<reference key="3">
    <citation type="journal article" date="2008" name="J. Proteome Res.">
        <title>Phosphoproteome analysis of fission yeast.</title>
        <authorList>
            <person name="Wilson-Grady J.T."/>
            <person name="Villen J."/>
            <person name="Gygi S.P."/>
        </authorList>
    </citation>
    <scope>PHOSPHORYLATION [LARGE SCALE ANALYSIS] AT SER-37; SER-53 AND SER-172</scope>
    <scope>IDENTIFICATION BY MASS SPECTROMETRY</scope>
</reference>
<reference key="4">
    <citation type="journal article" date="2009" name="Microbiology">
        <title>Autophagy-deficient Schizosaccharomyces pombe mutants undergo partial sporulation during nitrogen starvation.</title>
        <authorList>
            <person name="Mukaiyama H."/>
            <person name="Kajiwara S."/>
            <person name="Hosomi A."/>
            <person name="Giga-Hama Y."/>
            <person name="Tanaka N."/>
            <person name="Nakamura T."/>
            <person name="Takegawa K."/>
        </authorList>
    </citation>
    <scope>FUNCTION</scope>
</reference>
<evidence type="ECO:0000250" key="1"/>
<evidence type="ECO:0000255" key="2"/>
<evidence type="ECO:0000256" key="3">
    <source>
        <dbReference type="SAM" id="MobiDB-lite"/>
    </source>
</evidence>
<evidence type="ECO:0000269" key="4">
    <source>
    </source>
</evidence>
<evidence type="ECO:0000269" key="5">
    <source>
    </source>
</evidence>
<evidence type="ECO:0000269" key="6">
    <source>
    </source>
</evidence>
<evidence type="ECO:0000305" key="7"/>
<sequence length="656" mass="73061">MSNSQSIKIKKPRSNENFASGSYSSRRSQQIHRLSHSPMAEGFHKPKLNISPSESNLPNNVAENTTDTPVNYGSIRDENHNSRKGKDVTLNSDEAHSENVPSTSEDPDVVRRHLGGQAADDDNFSSLQLQGGDMHRQVYRWQQEVDQNKQIRRGRSRSFSAKVSDPNLHLRSVQDMKQAGGMRRDFLRNRASSISMSSNAHGNPNFLNRNFIEFLSVYGHFAGEELSEEDEDEDTDDFAMPRDVNPSLIHSTVPSEQEPLISRHGRYKLQTPGNASNGKAVLLLLKSFVGTGVLFLPKAFKLGGLVFSSATLLIVGVLSHICFLLLIQTRMKVPGSFGDIGGTLYGPHMRFAILASIVVSQIGFSSAYISFVASTLQACVKVISTTHREYHLAVFIFIQFLVFVPLSLVRKISKLSATALIADVFILLGILYLYFWDVITLATKGIADVAMFNKTDFSLFIGVAIFTYEGICLILPIQEQMAKPKNLPKLLTGVMAAISLLFISIGLLSYAAFGSKVKTVVILNMPESTFTVIIQFLYAIAILLSTPLQLFPAIAIIEQGIFTRSGKRNRKIKWRKNYLRVLIVILAILISWAGSSRLDLFVSMVGSVCCIPLIYMYPPMLHYKACANNWILRTLDIFMFTIGAFAMAFTTYMTFF</sequence>
<organism>
    <name type="scientific">Schizosaccharomyces pombe (strain 972 / ATCC 24843)</name>
    <name type="common">Fission yeast</name>
    <dbReference type="NCBI Taxonomy" id="284812"/>
    <lineage>
        <taxon>Eukaryota</taxon>
        <taxon>Fungi</taxon>
        <taxon>Dikarya</taxon>
        <taxon>Ascomycota</taxon>
        <taxon>Taphrinomycotina</taxon>
        <taxon>Schizosaccharomycetes</taxon>
        <taxon>Schizosaccharomycetales</taxon>
        <taxon>Schizosaccharomycetaceae</taxon>
        <taxon>Schizosaccharomyces</taxon>
    </lineage>
</organism>
<gene>
    <name type="primary">avt3</name>
    <name type="ORF">SPAC3H1.09c</name>
</gene>
<accession>Q10074</accession>